<organism>
    <name type="scientific">Shigella flexneri</name>
    <dbReference type="NCBI Taxonomy" id="623"/>
    <lineage>
        <taxon>Bacteria</taxon>
        <taxon>Pseudomonadati</taxon>
        <taxon>Pseudomonadota</taxon>
        <taxon>Gammaproteobacteria</taxon>
        <taxon>Enterobacterales</taxon>
        <taxon>Enterobacteriaceae</taxon>
        <taxon>Shigella</taxon>
    </lineage>
</organism>
<reference key="1">
    <citation type="submission" date="1997-05" db="EMBL/GenBank/DDBJ databases">
        <title>ShMu, a protein of S. flexneri 2a with hemagglutinin and mucinase activities is encoded by an open reading frame (she) that forms an antisense gene pair with the operon encoding Shigella entertoxin 1 (ShET1).</title>
        <authorList>
            <person name="Noriega F.R."/>
        </authorList>
    </citation>
    <scope>NUCLEOTIDE SEQUENCE [GENOMIC DNA]</scope>
    <source>
        <strain>M4243</strain>
    </source>
</reference>
<reference key="2">
    <citation type="journal article" date="2000" name="Infect. Immun.">
        <title>The sigA gene which is borne on the she pathogenicity island of Shigella flexneri 2a encodes an exported cytopathic protease involved in intestinal fluid accumulation.</title>
        <authorList>
            <person name="Al-Hasani K."/>
            <person name="Henderson I.R."/>
            <person name="Sakellaris H."/>
            <person name="Rajakumar K."/>
            <person name="Grant T."/>
            <person name="Nataro J.P."/>
            <person name="Robins-Browne R."/>
            <person name="Adler B."/>
        </authorList>
    </citation>
    <scope>NUCLEOTIDE SEQUENCE [GENOMIC DNA]</scope>
    <source>
        <strain>YSH6000 / Serotype 2a</strain>
    </source>
</reference>
<reference key="3">
    <citation type="journal article" date="2001" name="Microb. Pathog.">
        <title>Genetic organization of the she pathogenicity island in Shigella flexneri 2a.</title>
        <authorList>
            <person name="Al-Hasani K."/>
            <person name="Rajakumar K."/>
            <person name="Bulach D."/>
            <person name="Robins-Browne R."/>
            <person name="Adler B."/>
            <person name="Sakellaris H."/>
        </authorList>
    </citation>
    <scope>NUCLEOTIDE SEQUENCE [GENOMIC DNA]</scope>
    <source>
        <strain>YSH6000 / Serotype 2a</strain>
    </source>
</reference>
<reference key="4">
    <citation type="journal article" date="2002" name="Nucleic Acids Res.">
        <title>Genome sequence of Shigella flexneri 2a: insights into pathogenicity through comparison with genomes of Escherichia coli K12 and O157.</title>
        <authorList>
            <person name="Jin Q."/>
            <person name="Yuan Z."/>
            <person name="Xu J."/>
            <person name="Wang Y."/>
            <person name="Shen Y."/>
            <person name="Lu W."/>
            <person name="Wang J."/>
            <person name="Liu H."/>
            <person name="Yang J."/>
            <person name="Yang F."/>
            <person name="Zhang X."/>
            <person name="Zhang J."/>
            <person name="Yang G."/>
            <person name="Wu H."/>
            <person name="Qu D."/>
            <person name="Dong J."/>
            <person name="Sun L."/>
            <person name="Xue Y."/>
            <person name="Zhao A."/>
            <person name="Gao Y."/>
            <person name="Zhu J."/>
            <person name="Kan B."/>
            <person name="Ding K."/>
            <person name="Chen S."/>
            <person name="Cheng H."/>
            <person name="Yao Z."/>
            <person name="He B."/>
            <person name="Chen R."/>
            <person name="Ma D."/>
            <person name="Qiang B."/>
            <person name="Wen Y."/>
            <person name="Hou Y."/>
            <person name="Yu J."/>
        </authorList>
    </citation>
    <scope>NUCLEOTIDE SEQUENCE [LARGE SCALE GENOMIC DNA]</scope>
    <source>
        <strain>301 / Serotype 2a</strain>
    </source>
</reference>
<reference key="5">
    <citation type="journal article" date="2003" name="Infect. Immun.">
        <title>Complete genome sequence and comparative genomics of Shigella flexneri serotype 2a strain 2457T.</title>
        <authorList>
            <person name="Wei J."/>
            <person name="Goldberg M.B."/>
            <person name="Burland V."/>
            <person name="Venkatesan M.M."/>
            <person name="Deng W."/>
            <person name="Fournier G."/>
            <person name="Mayhew G.F."/>
            <person name="Plunkett G. III"/>
            <person name="Rose D.J."/>
            <person name="Darling A."/>
            <person name="Mau B."/>
            <person name="Perna N.T."/>
            <person name="Payne S.M."/>
            <person name="Runyen-Janecky L.J."/>
            <person name="Zhou S."/>
            <person name="Schwartz D.C."/>
            <person name="Blattner F.R."/>
        </authorList>
    </citation>
    <scope>NUCLEOTIDE SEQUENCE [LARGE SCALE GENOMIC DNA]</scope>
    <source>
        <strain>ATCC 700930 / 2457T / Serotype 2a</strain>
    </source>
</reference>
<reference key="6">
    <citation type="journal article" date="1999" name="Infect. Immun.">
        <title>Characterization of pic, a secreted protease of Shigella flexneri and enteroaggregative Escherichia coli.</title>
        <authorList>
            <person name="Henderson I.R."/>
            <person name="Czeczulin J."/>
            <person name="Eslava C."/>
            <person name="Noriega F.R."/>
            <person name="Nataro J.P."/>
        </authorList>
    </citation>
    <scope>FUNCTION</scope>
    <scope>SUBCELLULAR LOCATION</scope>
    <source>
        <strain>ATCC 700930 / 2457T / Serotype 2a</strain>
    </source>
</reference>
<keyword id="KW-0998">Cell outer membrane</keyword>
<keyword id="KW-0378">Hydrolase</keyword>
<keyword id="KW-0472">Membrane</keyword>
<keyword id="KW-0574">Periplasm</keyword>
<keyword id="KW-0645">Protease</keyword>
<keyword id="KW-1185">Reference proteome</keyword>
<keyword id="KW-0964">Secreted</keyword>
<keyword id="KW-0720">Serine protease</keyword>
<keyword id="KW-0732">Signal</keyword>
<keyword id="KW-0812">Transmembrane</keyword>
<keyword id="KW-1134">Transmembrane beta strand</keyword>
<keyword id="KW-0843">Virulence</keyword>
<keyword id="KW-0865">Zymogen</keyword>
<feature type="signal peptide" evidence="2">
    <location>
        <begin position="1"/>
        <end position="55"/>
    </location>
</feature>
<feature type="chain" id="PRO_0000387607" description="Serine protease pic autotransporter">
    <location>
        <begin position="56"/>
        <end position="1372"/>
    </location>
</feature>
<feature type="chain" id="PRO_0000026976" description="Serine protease pic">
    <location>
        <begin position="56"/>
        <end position="1095"/>
    </location>
</feature>
<feature type="chain" id="PRO_0000026977" description="Serine protease pic translocator" evidence="2">
    <location>
        <begin position="1096"/>
        <end position="1372"/>
    </location>
</feature>
<feature type="domain" description="Peptidase S6" evidence="4">
    <location>
        <begin position="56"/>
        <end position="301"/>
    </location>
</feature>
<feature type="domain" description="Autotransporter" evidence="3">
    <location>
        <begin position="1106"/>
        <end position="1372"/>
    </location>
</feature>
<feature type="active site" description="Charge relay system" evidence="4">
    <location>
        <position position="127"/>
    </location>
</feature>
<feature type="active site" description="Charge relay system" evidence="4">
    <location>
        <position position="155"/>
    </location>
</feature>
<feature type="active site" description="Charge relay system" evidence="4">
    <location>
        <position position="258"/>
    </location>
</feature>
<feature type="site" description="Cleavage" evidence="2">
    <location>
        <begin position="1095"/>
        <end position="1096"/>
    </location>
</feature>
<feature type="sequence variant" description="In strain: M4243 and YSH6000T.">
    <original>K</original>
    <variation>E</variation>
    <location>
        <position position="354"/>
    </location>
</feature>
<feature type="sequence variant" description="In strain: M4243 and YSH6000T.">
    <original>T</original>
    <variation>P</variation>
    <location>
        <position position="385"/>
    </location>
</feature>
<dbReference type="EC" id="3.4.21.-"/>
<dbReference type="EMBL" id="U35656">
    <property type="protein sequence ID" value="AAB58244.1"/>
    <property type="molecule type" value="Genomic_DNA"/>
</dbReference>
<dbReference type="EMBL" id="AF200692">
    <property type="protein sequence ID" value="AAK00464.1"/>
    <property type="status" value="ALT_INIT"/>
    <property type="molecule type" value="Genomic_DNA"/>
</dbReference>
<dbReference type="EMBL" id="AE005674">
    <property type="protein sequence ID" value="AAN44454.2"/>
    <property type="status" value="ALT_INIT"/>
    <property type="molecule type" value="Genomic_DNA"/>
</dbReference>
<dbReference type="EMBL" id="AE014073">
    <property type="protein sequence ID" value="AAP18274.1"/>
    <property type="status" value="ALT_INIT"/>
    <property type="molecule type" value="Genomic_DNA"/>
</dbReference>
<dbReference type="RefSeq" id="WP_001045650.1">
    <property type="nucleotide sequence ID" value="NZ_WPGW01000104.1"/>
</dbReference>
<dbReference type="SMR" id="Q54151"/>
<dbReference type="STRING" id="198214.SF2973"/>
<dbReference type="MEROPS" id="N04.002"/>
<dbReference type="MEROPS" id="S06.005"/>
<dbReference type="PaxDb" id="198214-SF2973"/>
<dbReference type="KEGG" id="sfx:S3178"/>
<dbReference type="HOGENOM" id="CLU_000723_0_0_6"/>
<dbReference type="PHI-base" id="PHI:2980"/>
<dbReference type="Proteomes" id="UP000001006">
    <property type="component" value="Chromosome"/>
</dbReference>
<dbReference type="Proteomes" id="UP000002673">
    <property type="component" value="Chromosome"/>
</dbReference>
<dbReference type="GO" id="GO:0009279">
    <property type="term" value="C:cell outer membrane"/>
    <property type="evidence" value="ECO:0007669"/>
    <property type="project" value="UniProtKB-SubCell"/>
</dbReference>
<dbReference type="GO" id="GO:0009986">
    <property type="term" value="C:cell surface"/>
    <property type="evidence" value="ECO:0007669"/>
    <property type="project" value="UniProtKB-SubCell"/>
</dbReference>
<dbReference type="GO" id="GO:0005576">
    <property type="term" value="C:extracellular region"/>
    <property type="evidence" value="ECO:0007669"/>
    <property type="project" value="UniProtKB-SubCell"/>
</dbReference>
<dbReference type="GO" id="GO:0042597">
    <property type="term" value="C:periplasmic space"/>
    <property type="evidence" value="ECO:0007669"/>
    <property type="project" value="UniProtKB-SubCell"/>
</dbReference>
<dbReference type="GO" id="GO:0004252">
    <property type="term" value="F:serine-type endopeptidase activity"/>
    <property type="evidence" value="ECO:0007669"/>
    <property type="project" value="InterPro"/>
</dbReference>
<dbReference type="GO" id="GO:0006508">
    <property type="term" value="P:proteolysis"/>
    <property type="evidence" value="ECO:0007669"/>
    <property type="project" value="UniProtKB-KW"/>
</dbReference>
<dbReference type="CDD" id="cd01343">
    <property type="entry name" value="PL1_Passenger_AT"/>
    <property type="match status" value="1"/>
</dbReference>
<dbReference type="Gene3D" id="2.160.20.20">
    <property type="match status" value="1"/>
</dbReference>
<dbReference type="Gene3D" id="2.40.10.120">
    <property type="match status" value="1"/>
</dbReference>
<dbReference type="Gene3D" id="2.40.128.130">
    <property type="entry name" value="Autotransporter beta-domain"/>
    <property type="match status" value="1"/>
</dbReference>
<dbReference type="InterPro" id="IPR005546">
    <property type="entry name" value="Autotransporte_beta"/>
</dbReference>
<dbReference type="InterPro" id="IPR036709">
    <property type="entry name" value="Autotransporte_beta_dom_sf"/>
</dbReference>
<dbReference type="InterPro" id="IPR012332">
    <property type="entry name" value="Autotransporter_pectin_lyase_C"/>
</dbReference>
<dbReference type="InterPro" id="IPR050909">
    <property type="entry name" value="Bact_Autotransporter_VF"/>
</dbReference>
<dbReference type="InterPro" id="IPR006315">
    <property type="entry name" value="OM_autotransptr_brl_dom"/>
</dbReference>
<dbReference type="InterPro" id="IPR011050">
    <property type="entry name" value="Pectin_lyase_fold/virulence"/>
</dbReference>
<dbReference type="InterPro" id="IPR000710">
    <property type="entry name" value="Peptidase_S6"/>
</dbReference>
<dbReference type="InterPro" id="IPR030396">
    <property type="entry name" value="Peptidase_S6_dom"/>
</dbReference>
<dbReference type="NCBIfam" id="TIGR01414">
    <property type="entry name" value="autotrans_barl"/>
    <property type="match status" value="1"/>
</dbReference>
<dbReference type="PANTHER" id="PTHR12338">
    <property type="entry name" value="AUTOTRANSPORTER"/>
    <property type="match status" value="1"/>
</dbReference>
<dbReference type="PANTHER" id="PTHR12338:SF9">
    <property type="entry name" value="IMMUNOGLOBULIN A1 PROTEASE AUTOTRANSPORTER"/>
    <property type="match status" value="1"/>
</dbReference>
<dbReference type="Pfam" id="PF03797">
    <property type="entry name" value="Autotransporter"/>
    <property type="match status" value="1"/>
</dbReference>
<dbReference type="Pfam" id="PF24078">
    <property type="entry name" value="Beta-sol_PIC_HAP1_IgA0_2nd"/>
    <property type="match status" value="1"/>
</dbReference>
<dbReference type="Pfam" id="PF02395">
    <property type="entry name" value="Peptidase_S6"/>
    <property type="match status" value="1"/>
</dbReference>
<dbReference type="PRINTS" id="PR00921">
    <property type="entry name" value="IGASERPTASE"/>
</dbReference>
<dbReference type="SMART" id="SM00869">
    <property type="entry name" value="Autotransporter"/>
    <property type="match status" value="1"/>
</dbReference>
<dbReference type="SUPFAM" id="SSF103515">
    <property type="entry name" value="Autotransporter"/>
    <property type="match status" value="1"/>
</dbReference>
<dbReference type="SUPFAM" id="SSF51126">
    <property type="entry name" value="Pectin lyase-like"/>
    <property type="match status" value="2"/>
</dbReference>
<dbReference type="PROSITE" id="PS51208">
    <property type="entry name" value="AUTOTRANSPORTER"/>
    <property type="match status" value="1"/>
</dbReference>
<dbReference type="PROSITE" id="PS51691">
    <property type="entry name" value="PEPTIDASE_S6"/>
    <property type="match status" value="1"/>
</dbReference>
<comment type="function">
    <text evidence="5">Involved in intestinal colonization, displays in vitro mucinolytic activity, serum resistance, and hemagglutination. Important to penetrate the intestinal mucus layer.</text>
</comment>
<comment type="subcellular location">
    <molecule>Serine protease pic autotransporter</molecule>
    <subcellularLocation>
        <location evidence="1">Periplasm</location>
    </subcellularLocation>
</comment>
<comment type="subcellular location">
    <molecule>Serine protease pic</molecule>
    <subcellularLocation>
        <location>Secreted</location>
    </subcellularLocation>
    <subcellularLocation>
        <location>Cell surface</location>
    </subcellularLocation>
</comment>
<comment type="subcellular location">
    <molecule>Serine protease pic translocator</molecule>
    <subcellularLocation>
        <location evidence="1">Cell outer membrane</location>
        <topology evidence="1">Multi-pass membrane protein</topology>
    </subcellularLocation>
    <text evidence="1">The cleaved C-terminal fragment (autotransporter domain) is localized in the outer membrane.</text>
</comment>
<comment type="domain">
    <text evidence="1">The signal peptide, cleaved at the inner membrane, guides the autotransporter protein to the periplasmic space. Then, insertion of the C-terminal translocator domain in the outer membrane forms a hydrophilic pore for the translocation of the passenger domain to the bacterial cell surface, with subsequent cleavage (By similarity).</text>
</comment>
<comment type="PTM">
    <text evidence="6">Cleaved to release the mature protein from the outer membrane.</text>
</comment>
<comment type="miscellaneous">
    <text>The S.flexneri genes encoding ShET1 enterotoxin subunits set1A and set1B are contained within the pic gene, on the complementary non-coding strand.</text>
</comment>
<comment type="sequence caution" evidence="6">
    <conflict type="erroneous initiation">
        <sequence resource="EMBL-CDS" id="AAK00464"/>
    </conflict>
</comment>
<comment type="sequence caution" evidence="6">
    <conflict type="erroneous initiation">
        <sequence resource="EMBL-CDS" id="AAN44454"/>
    </conflict>
</comment>
<comment type="sequence caution" evidence="6">
    <conflict type="erroneous initiation">
        <sequence resource="EMBL-CDS" id="AAP18274"/>
    </conflict>
</comment>
<sequence>MNKVYSLKYCPVTGGLIAVSELARRVIKKTCRRLTHILLAGIPAICLCYSQISQAGIVRSDIAYQIYRDFAENKGLFVPGANDIPVYDKDGKLVGRLGKAPMADFSSVSSNGVATLVSPQYIVSVKHNGGYRSVSFGNGKNTYSLVDRNNHPSIDFHAPRLNKLVTEVIPSAVTSEGTKANAYKYTERYTAFYRVGSGTQYTKDKDGNLVKVAGGYAFKTGGTTGVPLISDATIVSNPGQTYNPVNGPLPDYGAPGDSGSPLFAYDKQQKKWVIVAVLRAYAGINGATNWWNVIPTDYLNQVMQDDFDAPVDFVSGLGPLNWTYDKTSGTGTLSQGSKNWTMHGQKDNDLNAGKNLVFSGQNGAIILKDSVTQGAGYLEFKDSYTVSAESGKTWTGAGIITDKGTNVTWKVNGVAGDNLHKLGEGTLTINGTGVNPGGLKTGDGIVVLNQQADTAGNIQAFSSVNLASGRPTVVLGDARQVNPDNISWGYRGGKLDLNGNAVTFTRLQAADYGAVITNNAQQKSQLLLDLKAQDTNVSEPTIGNISPFGGTGTPGNLYSMILNSQTRFYILKSASYGNTLWGNSLNDPAQWEFVGMNKNKAVQTVKDRILAGRAKQPVIFHGQLTGNMDVAIPQVPGGRKVIFDGSVNLPEGTLSQDSGTLIFQGHPVIHASISGSAPVSLNQKDWENRQFTMKTLSLKDADFHLSRNASLNSDIKSDNSHITLGSDRAFVDKNDGTGNYVIPEEGTSVPDTVNDRSQYEGNITLNHNSALDIGSRFTGGIDAYDSAVSITSPDVLLTAPGAFAGSSLTVHDGGHLTALNGLFSDGHIQAGKNGKITLSGTPVKDTANQYAPAVYLTDGYDLTGDNAALEITRGAHASGDIHASAASTVTIGSDTPAELASAETAASAFAGSLLEGYNAAFNGAITGGRADVSMHNALWTLGGDSAIHSLTVRNSRISSEGDRTFRTLTVNKLDATGSDFVLRTDLKNADKINVTEKATGSDNSLNVSFMNNPAQGQALNIPLVTAPAGTSAEMFKAGTRVTGFSRVTPTLHVDTSGGNTKWILDGFKAEADKAAAAKADSFMNAGYKNFMTEVNNLNKRMGDLRDTNGDAGAWARIMSGAGSADGGYSDNYTHVQVGFDKKHELDGVDLFTGVTMTYTDSSADSHAFSGKTKSVGGGLYASALFESGAYIDLIGKYIHHDNDYTGNFASLGTKHYNTHSWYAGAETGYRYHLTEDTFIEPQAELVYGAVSGKTFRWKDGDMDLSMKNRDFSPLVGRTGVELGKTFSGKDWSVTARAGTSWQFDLLNNGETVLRDASGEKRIKGEKDSRMLFNVGMNAQIKDNMRFGLEFEKSAFGKYNVDNAVNANFRYMF</sequence>
<proteinExistence type="inferred from homology"/>
<gene>
    <name type="primary">pic</name>
    <name type="synonym">she</name>
    <name type="synonym">sigA</name>
    <name type="ordered locus">SF2973</name>
    <name type="ordered locus">S3178</name>
</gene>
<evidence type="ECO:0000250" key="1"/>
<evidence type="ECO:0000255" key="2"/>
<evidence type="ECO:0000255" key="3">
    <source>
        <dbReference type="PROSITE-ProRule" id="PRU00556"/>
    </source>
</evidence>
<evidence type="ECO:0000255" key="4">
    <source>
        <dbReference type="PROSITE-ProRule" id="PRU01028"/>
    </source>
</evidence>
<evidence type="ECO:0000269" key="5">
    <source>
    </source>
</evidence>
<evidence type="ECO:0000305" key="6"/>
<accession>Q54151</accession>
<accession>Q7UBM2</accession>
<accession>Q83Q79</accession>
<accession>Q9AL58</accession>
<name>PIC_SHIFL</name>
<protein>
    <recommendedName>
        <fullName>Serine protease pic autotransporter</fullName>
        <ecNumber>3.4.21.-</ecNumber>
    </recommendedName>
    <alternativeName>
        <fullName>ShMu</fullName>
    </alternativeName>
    <component>
        <recommendedName>
            <fullName>Serine protease pic</fullName>
        </recommendedName>
    </component>
    <component>
        <recommendedName>
            <fullName>Serine protease pic translocator</fullName>
        </recommendedName>
    </component>
</protein>